<proteinExistence type="inferred from homology"/>
<protein>
    <recommendedName>
        <fullName evidence="1">Protein-glutamate methylesterase/protein-glutamine glutaminase 2</fullName>
        <ecNumber evidence="1">3.1.1.61</ecNumber>
        <ecNumber evidence="1">3.5.1.44</ecNumber>
    </recommendedName>
</protein>
<comment type="function">
    <text evidence="1">Involved in chemotaxis. Part of a chemotaxis signal transduction system that modulates chemotaxis in response to various stimuli. Catalyzes the demethylation of specific methylglutamate residues introduced into the chemoreceptors (methyl-accepting chemotaxis proteins or MCP) by CheR. Also mediates the irreversible deamidation of specific glutamine residues to glutamic acid.</text>
</comment>
<comment type="catalytic activity">
    <reaction evidence="1">
        <text>[protein]-L-glutamate 5-O-methyl ester + H2O = L-glutamyl-[protein] + methanol + H(+)</text>
        <dbReference type="Rhea" id="RHEA:23236"/>
        <dbReference type="Rhea" id="RHEA-COMP:10208"/>
        <dbReference type="Rhea" id="RHEA-COMP:10311"/>
        <dbReference type="ChEBI" id="CHEBI:15377"/>
        <dbReference type="ChEBI" id="CHEBI:15378"/>
        <dbReference type="ChEBI" id="CHEBI:17790"/>
        <dbReference type="ChEBI" id="CHEBI:29973"/>
        <dbReference type="ChEBI" id="CHEBI:82795"/>
        <dbReference type="EC" id="3.1.1.61"/>
    </reaction>
</comment>
<comment type="catalytic activity">
    <reaction evidence="1">
        <text>L-glutaminyl-[protein] + H2O = L-glutamyl-[protein] + NH4(+)</text>
        <dbReference type="Rhea" id="RHEA:16441"/>
        <dbReference type="Rhea" id="RHEA-COMP:10207"/>
        <dbReference type="Rhea" id="RHEA-COMP:10208"/>
        <dbReference type="ChEBI" id="CHEBI:15377"/>
        <dbReference type="ChEBI" id="CHEBI:28938"/>
        <dbReference type="ChEBI" id="CHEBI:29973"/>
        <dbReference type="ChEBI" id="CHEBI:30011"/>
        <dbReference type="EC" id="3.5.1.44"/>
    </reaction>
</comment>
<comment type="subcellular location">
    <subcellularLocation>
        <location evidence="1">Cytoplasm</location>
    </subcellularLocation>
</comment>
<comment type="domain">
    <text evidence="1">Contains a C-terminal catalytic domain, and an N-terminal region which modulates catalytic activity.</text>
</comment>
<comment type="PTM">
    <text evidence="1">Phosphorylated by CheA. Phosphorylation of the N-terminal regulatory domain activates the methylesterase activity.</text>
</comment>
<comment type="similarity">
    <text evidence="1">Belongs to the CheB family.</text>
</comment>
<gene>
    <name evidence="1" type="primary">cheB2</name>
    <name type="ordered locus">XOO2859</name>
</gene>
<dbReference type="EC" id="3.1.1.61" evidence="1"/>
<dbReference type="EC" id="3.5.1.44" evidence="1"/>
<dbReference type="EMBL" id="AE013598">
    <property type="protein sequence ID" value="AAW76113.1"/>
    <property type="molecule type" value="Genomic_DNA"/>
</dbReference>
<dbReference type="SMR" id="Q5GYV8"/>
<dbReference type="STRING" id="291331.XOO2859"/>
<dbReference type="KEGG" id="xoo:XOO2859"/>
<dbReference type="HOGENOM" id="CLU_000445_51_0_6"/>
<dbReference type="Proteomes" id="UP000006735">
    <property type="component" value="Chromosome"/>
</dbReference>
<dbReference type="GO" id="GO:0005737">
    <property type="term" value="C:cytoplasm"/>
    <property type="evidence" value="ECO:0007669"/>
    <property type="project" value="UniProtKB-SubCell"/>
</dbReference>
<dbReference type="GO" id="GO:0000156">
    <property type="term" value="F:phosphorelay response regulator activity"/>
    <property type="evidence" value="ECO:0007669"/>
    <property type="project" value="InterPro"/>
</dbReference>
<dbReference type="GO" id="GO:0008984">
    <property type="term" value="F:protein-glutamate methylesterase activity"/>
    <property type="evidence" value="ECO:0007669"/>
    <property type="project" value="UniProtKB-UniRule"/>
</dbReference>
<dbReference type="GO" id="GO:0050568">
    <property type="term" value="F:protein-glutamine glutaminase activity"/>
    <property type="evidence" value="ECO:0007669"/>
    <property type="project" value="UniProtKB-UniRule"/>
</dbReference>
<dbReference type="GO" id="GO:0006935">
    <property type="term" value="P:chemotaxis"/>
    <property type="evidence" value="ECO:0007669"/>
    <property type="project" value="UniProtKB-UniRule"/>
</dbReference>
<dbReference type="CDD" id="cd16432">
    <property type="entry name" value="CheB_Rec"/>
    <property type="match status" value="1"/>
</dbReference>
<dbReference type="CDD" id="cd17541">
    <property type="entry name" value="REC_CheB-like"/>
    <property type="match status" value="1"/>
</dbReference>
<dbReference type="FunFam" id="3.40.50.2300:FF:000060">
    <property type="entry name" value="Protein-glutamate methylesterase/protein-glutamine glutaminase"/>
    <property type="match status" value="1"/>
</dbReference>
<dbReference type="Gene3D" id="3.40.50.2300">
    <property type="match status" value="1"/>
</dbReference>
<dbReference type="Gene3D" id="3.40.50.180">
    <property type="entry name" value="Methylesterase CheB, C-terminal domain"/>
    <property type="match status" value="1"/>
</dbReference>
<dbReference type="HAMAP" id="MF_00099">
    <property type="entry name" value="CheB_chemtxs"/>
    <property type="match status" value="1"/>
</dbReference>
<dbReference type="InterPro" id="IPR008248">
    <property type="entry name" value="CheB-like"/>
</dbReference>
<dbReference type="InterPro" id="IPR035909">
    <property type="entry name" value="CheB_C"/>
</dbReference>
<dbReference type="InterPro" id="IPR011006">
    <property type="entry name" value="CheY-like_superfamily"/>
</dbReference>
<dbReference type="InterPro" id="IPR000673">
    <property type="entry name" value="Sig_transdc_resp-reg_Me-estase"/>
</dbReference>
<dbReference type="InterPro" id="IPR001789">
    <property type="entry name" value="Sig_transdc_resp-reg_receiver"/>
</dbReference>
<dbReference type="NCBIfam" id="NF001965">
    <property type="entry name" value="PRK00742.1"/>
    <property type="match status" value="1"/>
</dbReference>
<dbReference type="NCBIfam" id="NF009206">
    <property type="entry name" value="PRK12555.1"/>
    <property type="match status" value="1"/>
</dbReference>
<dbReference type="PANTHER" id="PTHR42872">
    <property type="entry name" value="PROTEIN-GLUTAMATE METHYLESTERASE/PROTEIN-GLUTAMINE GLUTAMINASE"/>
    <property type="match status" value="1"/>
</dbReference>
<dbReference type="PANTHER" id="PTHR42872:SF6">
    <property type="entry name" value="PROTEIN-GLUTAMATE METHYLESTERASE_PROTEIN-GLUTAMINE GLUTAMINASE"/>
    <property type="match status" value="1"/>
</dbReference>
<dbReference type="Pfam" id="PF01339">
    <property type="entry name" value="CheB_methylest"/>
    <property type="match status" value="1"/>
</dbReference>
<dbReference type="Pfam" id="PF00072">
    <property type="entry name" value="Response_reg"/>
    <property type="match status" value="1"/>
</dbReference>
<dbReference type="PIRSF" id="PIRSF000876">
    <property type="entry name" value="RR_chemtxs_CheB"/>
    <property type="match status" value="1"/>
</dbReference>
<dbReference type="SMART" id="SM00448">
    <property type="entry name" value="REC"/>
    <property type="match status" value="1"/>
</dbReference>
<dbReference type="SUPFAM" id="SSF52172">
    <property type="entry name" value="CheY-like"/>
    <property type="match status" value="1"/>
</dbReference>
<dbReference type="SUPFAM" id="SSF52738">
    <property type="entry name" value="Methylesterase CheB, C-terminal domain"/>
    <property type="match status" value="1"/>
</dbReference>
<dbReference type="PROSITE" id="PS50122">
    <property type="entry name" value="CHEB"/>
    <property type="match status" value="1"/>
</dbReference>
<dbReference type="PROSITE" id="PS50110">
    <property type="entry name" value="RESPONSE_REGULATORY"/>
    <property type="match status" value="1"/>
</dbReference>
<reference key="1">
    <citation type="journal article" date="2005" name="Nucleic Acids Res.">
        <title>The genome sequence of Xanthomonas oryzae pathovar oryzae KACC10331, the bacterial blight pathogen of rice.</title>
        <authorList>
            <person name="Lee B.-M."/>
            <person name="Park Y.-J."/>
            <person name="Park D.-S."/>
            <person name="Kang H.-W."/>
            <person name="Kim J.-G."/>
            <person name="Song E.-S."/>
            <person name="Park I.-C."/>
            <person name="Yoon U.-H."/>
            <person name="Hahn J.-H."/>
            <person name="Koo B.-S."/>
            <person name="Lee G.-B."/>
            <person name="Kim H."/>
            <person name="Park H.-S."/>
            <person name="Yoon K.-O."/>
            <person name="Kim J.-H."/>
            <person name="Jung C.-H."/>
            <person name="Koh N.-H."/>
            <person name="Seo J.-S."/>
            <person name="Go S.-J."/>
        </authorList>
    </citation>
    <scope>NUCLEOTIDE SEQUENCE [LARGE SCALE GENOMIC DNA]</scope>
    <source>
        <strain>KACC10331 / KXO85</strain>
    </source>
</reference>
<keyword id="KW-0145">Chemotaxis</keyword>
<keyword id="KW-0963">Cytoplasm</keyword>
<keyword id="KW-0378">Hydrolase</keyword>
<keyword id="KW-0597">Phosphoprotein</keyword>
<keyword id="KW-1185">Reference proteome</keyword>
<organism>
    <name type="scientific">Xanthomonas oryzae pv. oryzae (strain KACC10331 / KXO85)</name>
    <dbReference type="NCBI Taxonomy" id="291331"/>
    <lineage>
        <taxon>Bacteria</taxon>
        <taxon>Pseudomonadati</taxon>
        <taxon>Pseudomonadota</taxon>
        <taxon>Gammaproteobacteria</taxon>
        <taxon>Lysobacterales</taxon>
        <taxon>Lysobacteraceae</taxon>
        <taxon>Xanthomonas</taxon>
    </lineage>
</organism>
<feature type="chain" id="PRO_0000225495" description="Protein-glutamate methylesterase/protein-glutamine glutaminase 2">
    <location>
        <begin position="1"/>
        <end position="358"/>
    </location>
</feature>
<feature type="domain" description="Response regulatory" evidence="1">
    <location>
        <begin position="8"/>
        <end position="125"/>
    </location>
</feature>
<feature type="domain" description="CheB-type methylesterase" evidence="1">
    <location>
        <begin position="157"/>
        <end position="352"/>
    </location>
</feature>
<feature type="active site" evidence="1">
    <location>
        <position position="177"/>
    </location>
</feature>
<feature type="active site" evidence="1">
    <location>
        <position position="203"/>
    </location>
</feature>
<feature type="active site" evidence="1">
    <location>
        <position position="299"/>
    </location>
</feature>
<feature type="modified residue" description="4-aspartylphosphate" evidence="1">
    <location>
        <position position="59"/>
    </location>
</feature>
<name>CHEB2_XANOR</name>
<sequence>MTLETPVRVLIVDDSAVVRQMLTEILSRDAGIEVVGSAADPLLAREKIKRLNPDVITLDVEMPRMDGLVFLENLMRLRPTPVVMISSLTERGADTTLQALSLGAVDFVSKPKIDVARGLEGYAEEIVSKVKMAAKAKVSALHRPSAPKVTLDMQSAPMPGSALRFRTTDRLVAIGASAGGTEALRVVLEHMPADAPAVVMTQHLPASFSTAFAERLNRHSAMSVREATDGEAILPGHAYLPPGGQHLRIIRDGARWRCRIDDGPPVNRHKPAVDVLFRSVAANAGANAVGAILTGMGDDGARGLLEMLQAGAPTLVQDEASSVVWGMPGAAYKLGAAQEVVPLDRVAERLLALSAQAR</sequence>
<evidence type="ECO:0000255" key="1">
    <source>
        <dbReference type="HAMAP-Rule" id="MF_00099"/>
    </source>
</evidence>
<accession>Q5GYV8</accession>